<dbReference type="EMBL" id="LT732575">
    <property type="protein sequence ID" value="SJN60137.1"/>
    <property type="molecule type" value="Genomic_DNA"/>
</dbReference>
<dbReference type="SMR" id="A0A219CMY0"/>
<dbReference type="GO" id="GO:0005576">
    <property type="term" value="C:extracellular region"/>
    <property type="evidence" value="ECO:0000314"/>
    <property type="project" value="UniProtKB"/>
</dbReference>
<dbReference type="GO" id="GO:0051715">
    <property type="term" value="P:cytolysis in another organism"/>
    <property type="evidence" value="ECO:0000314"/>
    <property type="project" value="UniProtKB"/>
</dbReference>
<dbReference type="GO" id="GO:0042742">
    <property type="term" value="P:defense response to bacterium"/>
    <property type="evidence" value="ECO:0007669"/>
    <property type="project" value="UniProtKB-KW"/>
</dbReference>
<dbReference type="GO" id="GO:0050832">
    <property type="term" value="P:defense response to fungus"/>
    <property type="evidence" value="ECO:0007669"/>
    <property type="project" value="UniProtKB-KW"/>
</dbReference>
<dbReference type="InterPro" id="IPR007962">
    <property type="entry name" value="Bombinin"/>
</dbReference>
<dbReference type="Pfam" id="PF05298">
    <property type="entry name" value="Bombinin"/>
    <property type="match status" value="1"/>
</dbReference>
<evidence type="ECO:0000255" key="1"/>
<evidence type="ECO:0000269" key="2">
    <source>
    </source>
</evidence>
<evidence type="ECO:0000303" key="3">
    <source>
    </source>
</evidence>
<evidence type="ECO:0000305" key="4"/>
<evidence type="ECO:0000305" key="5">
    <source>
    </source>
</evidence>
<evidence type="ECO:0000312" key="6">
    <source>
        <dbReference type="EMBL" id="SJN60137.1"/>
    </source>
</evidence>
<protein>
    <recommendedName>
        <fullName evidence="3">Bombinin-like peptides</fullName>
    </recommendedName>
    <component>
        <recommendedName>
            <fullName evidence="3">Bombinin-BO1</fullName>
        </recommendedName>
    </component>
    <component>
        <recommendedName>
            <fullName evidence="3">Bombinin H-BO1</fullName>
        </recommendedName>
    </component>
</protein>
<reference evidence="6" key="1">
    <citation type="journal article" date="2018" name="Amino Acids">
        <title>Molecular characterization and bioactivity evaluation of two novel bombinin peptides from the skin secretion of Oriental fire-bellied toad, Bombina orientalis.</title>
        <authorList>
            <person name="Peng X."/>
            <person name="Zhou C."/>
            <person name="Hou X."/>
            <person name="Liu Y."/>
            <person name="Wang Z."/>
            <person name="Peng X."/>
            <person name="Zhang Z."/>
            <person name="Wang R."/>
            <person name="Kong D."/>
        </authorList>
    </citation>
    <scope>NUCLEOTIDE SEQUENCE [MRNA]</scope>
    <scope>PROTEIN SEQUENCE OF 44-68 AND 115-131</scope>
    <scope>FUNCTION</scope>
    <scope>SUBCELLULAR LOCATION</scope>
    <scope>MASS SPECTROMETRY</scope>
    <scope>AMIDATION AT PHE-68 AND LEU-131</scope>
    <scope>IDENTIFICATION BY MASS SPECTROMETRY</scope>
    <source>
        <tissue evidence="3">Skin secretion</tissue>
    </source>
</reference>
<organism evidence="6">
    <name type="scientific">Bombina orientalis</name>
    <name type="common">Oriental fire-bellied toad</name>
    <dbReference type="NCBI Taxonomy" id="8346"/>
    <lineage>
        <taxon>Eukaryota</taxon>
        <taxon>Metazoa</taxon>
        <taxon>Chordata</taxon>
        <taxon>Craniata</taxon>
        <taxon>Vertebrata</taxon>
        <taxon>Euteleostomi</taxon>
        <taxon>Amphibia</taxon>
        <taxon>Batrachia</taxon>
        <taxon>Anura</taxon>
        <taxon>Bombinatoridae</taxon>
        <taxon>Bombina</taxon>
    </lineage>
</organism>
<gene>
    <name evidence="6" type="primary">BLP8-BH9</name>
</gene>
<name>BMNL5_BOMOR</name>
<proteinExistence type="evidence at protein level"/>
<comment type="function">
    <molecule>Bombinin-BO1</molecule>
    <text evidence="2">Has antimicrobial activity against Gram-negative bacterium E.coli (MIC=26.3 uM), Gram-positive bacterium S.aureus (MIC=26.3 uM) and yeast C.albicans (MIC=52.5 uM). Has moderate hemolytic activity towards human erythrocytes at a concentration of 52.2 uM.</text>
</comment>
<comment type="function">
    <molecule>Bombinin H-BO1</molecule>
    <text evidence="2">Has no antimicrobial activity at concentrations up to 161 uM. Has moderate hemolytic activity towards human erythrocytes at a concentration of 40.3 uM.</text>
</comment>
<comment type="subcellular location">
    <subcellularLocation>
        <location evidence="1 2">Secreted</location>
    </subcellularLocation>
</comment>
<comment type="tissue specificity">
    <text evidence="5">Expressed by the skin glands.</text>
</comment>
<comment type="mass spectrometry">
    <molecule>Bombinin-BO1</molecule>
    <text>Bombinin-BO1.</text>
</comment>
<comment type="mass spectrometry">
    <molecule>Bombinin H-BO1</molecule>
    <text>Bombinin H-BO1.</text>
</comment>
<comment type="similarity">
    <text evidence="1">Belongs to the bombinin family.</text>
</comment>
<feature type="signal peptide" evidence="1">
    <location>
        <begin position="1"/>
        <end position="18"/>
    </location>
</feature>
<feature type="propeptide" id="PRO_0000443728" evidence="4">
    <location>
        <begin position="19"/>
        <end position="42"/>
    </location>
</feature>
<feature type="peptide" id="PRO_0000443729" description="Bombinin-BO1" evidence="2">
    <location>
        <begin position="44"/>
        <end position="68"/>
    </location>
</feature>
<feature type="propeptide" id="PRO_0000443730" evidence="4">
    <location>
        <begin position="72"/>
        <end position="112"/>
    </location>
</feature>
<feature type="peptide" id="PRO_0000443731" description="Bombinin H-BO1" evidence="2">
    <location>
        <begin position="115"/>
        <end position="131"/>
    </location>
</feature>
<feature type="modified residue" description="Phenylalanine amide" evidence="2">
    <location>
        <position position="68"/>
    </location>
</feature>
<feature type="modified residue" description="Leucine amide" evidence="2">
    <location>
        <position position="131"/>
    </location>
</feature>
<accession>A0A219CMY0</accession>
<sequence>MNFKYIIAVSFLIASAYARSEEYDIQSLSQRDVLEEESLRKIRGIGSAILSAGKSIIKGLAKGLAEHFGKRTAEDHEVMKRLEAAMRDLDSLDYPEEASERETRGFNQEEKEKRIIGPVLGLVGKALGGLLG</sequence>
<keyword id="KW-0027">Amidation</keyword>
<keyword id="KW-0878">Amphibian defense peptide</keyword>
<keyword id="KW-0044">Antibiotic</keyword>
<keyword id="KW-0929">Antimicrobial</keyword>
<keyword id="KW-0165">Cleavage on pair of basic residues</keyword>
<keyword id="KW-0204">Cytolysis</keyword>
<keyword id="KW-0903">Direct protein sequencing</keyword>
<keyword id="KW-0295">Fungicide</keyword>
<keyword id="KW-0354">Hemolysis</keyword>
<keyword id="KW-0964">Secreted</keyword>
<keyword id="KW-0732">Signal</keyword>